<proteinExistence type="inferred from homology"/>
<protein>
    <recommendedName>
        <fullName>Citrate lyase subunit beta-like protein</fullName>
        <ecNumber>4.1.-.-</ecNumber>
    </recommendedName>
</protein>
<reference key="1">
    <citation type="journal article" date="2002" name="J. Bacteriol.">
        <title>Whole-genome comparison of Mycobacterium tuberculosis clinical and laboratory strains.</title>
        <authorList>
            <person name="Fleischmann R.D."/>
            <person name="Alland D."/>
            <person name="Eisen J.A."/>
            <person name="Carpenter L."/>
            <person name="White O."/>
            <person name="Peterson J.D."/>
            <person name="DeBoy R.T."/>
            <person name="Dodson R.J."/>
            <person name="Gwinn M.L."/>
            <person name="Haft D.H."/>
            <person name="Hickey E.K."/>
            <person name="Kolonay J.F."/>
            <person name="Nelson W.C."/>
            <person name="Umayam L.A."/>
            <person name="Ermolaeva M.D."/>
            <person name="Salzberg S.L."/>
            <person name="Delcher A."/>
            <person name="Utterback T.R."/>
            <person name="Weidman J.F."/>
            <person name="Khouri H.M."/>
            <person name="Gill J."/>
            <person name="Mikula A."/>
            <person name="Bishai W."/>
            <person name="Jacobs W.R. Jr."/>
            <person name="Venter J.C."/>
            <person name="Fraser C.M."/>
        </authorList>
    </citation>
    <scope>NUCLEOTIDE SEQUENCE [LARGE SCALE GENOMIC DNA]</scope>
    <source>
        <strain>CDC 1551 / Oshkosh</strain>
    </source>
</reference>
<gene>
    <name type="primary">citE</name>
    <name type="ordered locus">MT2573</name>
</gene>
<comment type="function">
    <text evidence="2">May play a role in fatty acid biosynthesis.</text>
</comment>
<comment type="cofactor">
    <cofactor evidence="1">
        <name>Mg(2+)</name>
        <dbReference type="ChEBI" id="CHEBI:18420"/>
    </cofactor>
    <text evidence="1">Binds 1 Mg(2+) ion per subunit.</text>
</comment>
<comment type="subunit">
    <text evidence="1">Homotrimer.</text>
</comment>
<comment type="similarity">
    <text evidence="2">Belongs to the HpcH/HpaI aldolase family. Citrate lyase beta subunit-like subfamily.</text>
</comment>
<comment type="caution">
    <text evidence="2">This organism lacks the other subunits that are necessary for ATP-independent citrate lyase activity. Even though this protein has clear similarity to citrate lyase beta subunit, it is expected to have a somewhat different enzyme activity.</text>
</comment>
<dbReference type="EC" id="4.1.-.-"/>
<dbReference type="EMBL" id="AE000516">
    <property type="protein sequence ID" value="AAK46877.1"/>
    <property type="molecule type" value="Genomic_DNA"/>
</dbReference>
<dbReference type="PIR" id="B70550">
    <property type="entry name" value="B70550"/>
</dbReference>
<dbReference type="RefSeq" id="WP_003412766.1">
    <property type="nucleotide sequence ID" value="NZ_KK341227.1"/>
</dbReference>
<dbReference type="SMR" id="P9WPE0"/>
<dbReference type="GeneID" id="45426492"/>
<dbReference type="KEGG" id="mtc:MT2573"/>
<dbReference type="PATRIC" id="fig|83331.31.peg.2775"/>
<dbReference type="HOGENOM" id="CLU_044864_2_1_11"/>
<dbReference type="Proteomes" id="UP000001020">
    <property type="component" value="Chromosome"/>
</dbReference>
<dbReference type="GO" id="GO:0016829">
    <property type="term" value="F:lyase activity"/>
    <property type="evidence" value="ECO:0007669"/>
    <property type="project" value="UniProtKB-KW"/>
</dbReference>
<dbReference type="GO" id="GO:0000287">
    <property type="term" value="F:magnesium ion binding"/>
    <property type="evidence" value="ECO:0007669"/>
    <property type="project" value="TreeGrafter"/>
</dbReference>
<dbReference type="GO" id="GO:0006107">
    <property type="term" value="P:oxaloacetate metabolic process"/>
    <property type="evidence" value="ECO:0007669"/>
    <property type="project" value="TreeGrafter"/>
</dbReference>
<dbReference type="FunFam" id="3.20.20.60:FF:000038">
    <property type="entry name" value="Citrate lyase subunit beta-like protein"/>
    <property type="match status" value="1"/>
</dbReference>
<dbReference type="Gene3D" id="3.20.20.60">
    <property type="entry name" value="Phosphoenolpyruvate-binding domains"/>
    <property type="match status" value="1"/>
</dbReference>
<dbReference type="InterPro" id="IPR005000">
    <property type="entry name" value="Aldolase/citrate-lyase_domain"/>
</dbReference>
<dbReference type="InterPro" id="IPR011206">
    <property type="entry name" value="Citrate_lyase_beta/mcl1/mcl2"/>
</dbReference>
<dbReference type="InterPro" id="IPR015813">
    <property type="entry name" value="Pyrv/PenolPyrv_kinase-like_dom"/>
</dbReference>
<dbReference type="InterPro" id="IPR040442">
    <property type="entry name" value="Pyrv_kinase-like_dom_sf"/>
</dbReference>
<dbReference type="PANTHER" id="PTHR32308:SF10">
    <property type="entry name" value="CITRATE LYASE SUBUNIT BETA"/>
    <property type="match status" value="1"/>
</dbReference>
<dbReference type="PANTHER" id="PTHR32308">
    <property type="entry name" value="LYASE BETA SUBUNIT, PUTATIVE (AFU_ORTHOLOGUE AFUA_4G13030)-RELATED"/>
    <property type="match status" value="1"/>
</dbReference>
<dbReference type="Pfam" id="PF03328">
    <property type="entry name" value="HpcH_HpaI"/>
    <property type="match status" value="1"/>
</dbReference>
<dbReference type="PIRSF" id="PIRSF015582">
    <property type="entry name" value="Cit_lyase_B"/>
    <property type="match status" value="1"/>
</dbReference>
<dbReference type="SUPFAM" id="SSF51621">
    <property type="entry name" value="Phosphoenolpyruvate/pyruvate domain"/>
    <property type="match status" value="1"/>
</dbReference>
<feature type="chain" id="PRO_0000426968" description="Citrate lyase subunit beta-like protein">
    <location>
        <begin position="1"/>
        <end position="273"/>
    </location>
</feature>
<feature type="binding site" evidence="1">
    <location>
        <position position="64"/>
    </location>
    <ligand>
        <name>substrate</name>
    </ligand>
</feature>
<feature type="binding site" evidence="1">
    <location>
        <position position="112"/>
    </location>
    <ligand>
        <name>Mg(2+)</name>
        <dbReference type="ChEBI" id="CHEBI:18420"/>
    </ligand>
</feature>
<feature type="binding site" evidence="1">
    <location>
        <position position="112"/>
    </location>
    <ligand>
        <name>substrate</name>
    </ligand>
</feature>
<feature type="binding site" evidence="1">
    <location>
        <position position="138"/>
    </location>
    <ligand>
        <name>Mg(2+)</name>
        <dbReference type="ChEBI" id="CHEBI:18420"/>
    </ligand>
</feature>
<name>CITEL_MYCTO</name>
<organism>
    <name type="scientific">Mycobacterium tuberculosis (strain CDC 1551 / Oshkosh)</name>
    <dbReference type="NCBI Taxonomy" id="83331"/>
    <lineage>
        <taxon>Bacteria</taxon>
        <taxon>Bacillati</taxon>
        <taxon>Actinomycetota</taxon>
        <taxon>Actinomycetes</taxon>
        <taxon>Mycobacteriales</taxon>
        <taxon>Mycobacteriaceae</taxon>
        <taxon>Mycobacterium</taxon>
        <taxon>Mycobacterium tuberculosis complex</taxon>
    </lineage>
</organism>
<accession>P9WPE0</accession>
<accession>L0TCQ1</accession>
<accession>O06162</accession>
<accession>Q7D713</accession>
<keyword id="KW-0456">Lyase</keyword>
<keyword id="KW-0460">Magnesium</keyword>
<keyword id="KW-0479">Metal-binding</keyword>
<keyword id="KW-1185">Reference proteome</keyword>
<sequence length="273" mass="28886">MNLRAAGPGWLFCPADRPERFAKAAAAADVVILDLEDGVAEAQKPAARNALRDTPLDPERTVVRINAGGTADQARDLEALAGTAYTTVMLPKAESAAQVIELAPRDVIALVETARGAVCAAEIAAADPTVGMMWGAEDLIATLGGSSSRRADGAYRDVARHVRSTILLAASAFGRLALDAVHLDILDVEGLQEEARDAAAVGFDVTVCIHPSQIPVVRKAYRPSHEKLAWARRVLAASRSERGAFAFEGQMVDSPVLTHAETMLRRAGEATSE</sequence>
<evidence type="ECO:0000250" key="1"/>
<evidence type="ECO:0000305" key="2"/>